<gene>
    <name evidence="1" type="primary">ruvB</name>
    <name type="ordered locus">USA300HOU_1640</name>
</gene>
<accession>A8Z2G9</accession>
<comment type="function">
    <text evidence="1">The RuvA-RuvB-RuvC complex processes Holliday junction (HJ) DNA during genetic recombination and DNA repair, while the RuvA-RuvB complex plays an important role in the rescue of blocked DNA replication forks via replication fork reversal (RFR). RuvA specifically binds to HJ cruciform DNA, conferring on it an open structure. The RuvB hexamer acts as an ATP-dependent pump, pulling dsDNA into and through the RuvAB complex. RuvB forms 2 homohexamers on either side of HJ DNA bound by 1 or 2 RuvA tetramers; 4 subunits per hexamer contact DNA at a time. Coordinated motions by a converter formed by DNA-disengaged RuvB subunits stimulates ATP hydrolysis and nucleotide exchange. Immobilization of the converter enables RuvB to convert the ATP-contained energy into a lever motion, pulling 2 nucleotides of DNA out of the RuvA tetramer per ATP hydrolyzed, thus driving DNA branch migration. The RuvB motors rotate together with the DNA substrate, which together with the progressing nucleotide cycle form the mechanistic basis for DNA recombination by continuous HJ branch migration. Branch migration allows RuvC to scan DNA until it finds its consensus sequence, where it cleaves and resolves cruciform DNA.</text>
</comment>
<comment type="catalytic activity">
    <reaction evidence="1">
        <text>ATP + H2O = ADP + phosphate + H(+)</text>
        <dbReference type="Rhea" id="RHEA:13065"/>
        <dbReference type="ChEBI" id="CHEBI:15377"/>
        <dbReference type="ChEBI" id="CHEBI:15378"/>
        <dbReference type="ChEBI" id="CHEBI:30616"/>
        <dbReference type="ChEBI" id="CHEBI:43474"/>
        <dbReference type="ChEBI" id="CHEBI:456216"/>
    </reaction>
</comment>
<comment type="subunit">
    <text evidence="1">Homohexamer. Forms an RuvA(8)-RuvB(12)-Holliday junction (HJ) complex. HJ DNA is sandwiched between 2 RuvA tetramers; dsDNA enters through RuvA and exits via RuvB. An RuvB hexamer assembles on each DNA strand where it exits the tetramer. Each RuvB hexamer is contacted by two RuvA subunits (via domain III) on 2 adjacent RuvB subunits; this complex drives branch migration. In the full resolvosome a probable DNA-RuvA(4)-RuvB(12)-RuvC(2) complex forms which resolves the HJ.</text>
</comment>
<comment type="subcellular location">
    <subcellularLocation>
        <location evidence="1">Cytoplasm</location>
    </subcellularLocation>
</comment>
<comment type="domain">
    <text evidence="1">Has 3 domains, the large (RuvB-L) and small ATPase (RuvB-S) domains and the C-terminal head (RuvB-H) domain. The head domain binds DNA, while the ATPase domains jointly bind ATP, ADP or are empty depending on the state of the subunit in the translocation cycle. During a single DNA translocation step the structure of each domain remains the same, but their relative positions change.</text>
</comment>
<comment type="similarity">
    <text evidence="1">Belongs to the RuvB family.</text>
</comment>
<organism>
    <name type="scientific">Staphylococcus aureus (strain USA300 / TCH1516)</name>
    <dbReference type="NCBI Taxonomy" id="451516"/>
    <lineage>
        <taxon>Bacteria</taxon>
        <taxon>Bacillati</taxon>
        <taxon>Bacillota</taxon>
        <taxon>Bacilli</taxon>
        <taxon>Bacillales</taxon>
        <taxon>Staphylococcaceae</taxon>
        <taxon>Staphylococcus</taxon>
    </lineage>
</organism>
<protein>
    <recommendedName>
        <fullName evidence="1">Holliday junction branch migration complex subunit RuvB</fullName>
        <ecNumber evidence="1">3.6.4.-</ecNumber>
    </recommendedName>
</protein>
<name>RUVB_STAAT</name>
<proteinExistence type="inferred from homology"/>
<feature type="chain" id="PRO_1000074106" description="Holliday junction branch migration complex subunit RuvB">
    <location>
        <begin position="1"/>
        <end position="334"/>
    </location>
</feature>
<feature type="region of interest" description="Large ATPase domain (RuvB-L)" evidence="1">
    <location>
        <begin position="1"/>
        <end position="182"/>
    </location>
</feature>
<feature type="region of interest" description="Small ATPAse domain (RuvB-S)" evidence="1">
    <location>
        <begin position="183"/>
        <end position="253"/>
    </location>
</feature>
<feature type="region of interest" description="Head domain (RuvB-H)" evidence="1">
    <location>
        <begin position="256"/>
        <end position="334"/>
    </location>
</feature>
<feature type="binding site" evidence="1">
    <location>
        <position position="21"/>
    </location>
    <ligand>
        <name>ATP</name>
        <dbReference type="ChEBI" id="CHEBI:30616"/>
    </ligand>
</feature>
<feature type="binding site" evidence="1">
    <location>
        <position position="22"/>
    </location>
    <ligand>
        <name>ATP</name>
        <dbReference type="ChEBI" id="CHEBI:30616"/>
    </ligand>
</feature>
<feature type="binding site" evidence="1">
    <location>
        <position position="63"/>
    </location>
    <ligand>
        <name>ATP</name>
        <dbReference type="ChEBI" id="CHEBI:30616"/>
    </ligand>
</feature>
<feature type="binding site" evidence="1">
    <location>
        <position position="66"/>
    </location>
    <ligand>
        <name>ATP</name>
        <dbReference type="ChEBI" id="CHEBI:30616"/>
    </ligand>
</feature>
<feature type="binding site" evidence="1">
    <location>
        <position position="67"/>
    </location>
    <ligand>
        <name>ATP</name>
        <dbReference type="ChEBI" id="CHEBI:30616"/>
    </ligand>
</feature>
<feature type="binding site" evidence="1">
    <location>
        <position position="67"/>
    </location>
    <ligand>
        <name>Mg(2+)</name>
        <dbReference type="ChEBI" id="CHEBI:18420"/>
    </ligand>
</feature>
<feature type="binding site" evidence="1">
    <location>
        <position position="68"/>
    </location>
    <ligand>
        <name>ATP</name>
        <dbReference type="ChEBI" id="CHEBI:30616"/>
    </ligand>
</feature>
<feature type="binding site" evidence="1">
    <location>
        <begin position="129"/>
        <end position="131"/>
    </location>
    <ligand>
        <name>ATP</name>
        <dbReference type="ChEBI" id="CHEBI:30616"/>
    </ligand>
</feature>
<feature type="binding site" evidence="1">
    <location>
        <position position="172"/>
    </location>
    <ligand>
        <name>ATP</name>
        <dbReference type="ChEBI" id="CHEBI:30616"/>
    </ligand>
</feature>
<feature type="binding site" evidence="1">
    <location>
        <position position="182"/>
    </location>
    <ligand>
        <name>ATP</name>
        <dbReference type="ChEBI" id="CHEBI:30616"/>
    </ligand>
</feature>
<feature type="binding site" evidence="1">
    <location>
        <position position="219"/>
    </location>
    <ligand>
        <name>ATP</name>
        <dbReference type="ChEBI" id="CHEBI:30616"/>
    </ligand>
</feature>
<feature type="binding site" evidence="1">
    <location>
        <position position="292"/>
    </location>
    <ligand>
        <name>DNA</name>
        <dbReference type="ChEBI" id="CHEBI:16991"/>
    </ligand>
</feature>
<feature type="binding site" evidence="1">
    <location>
        <position position="311"/>
    </location>
    <ligand>
        <name>DNA</name>
        <dbReference type="ChEBI" id="CHEBI:16991"/>
    </ligand>
</feature>
<feature type="binding site" evidence="1">
    <location>
        <position position="316"/>
    </location>
    <ligand>
        <name>DNA</name>
        <dbReference type="ChEBI" id="CHEBI:16991"/>
    </ligand>
</feature>
<evidence type="ECO:0000255" key="1">
    <source>
        <dbReference type="HAMAP-Rule" id="MF_00016"/>
    </source>
</evidence>
<dbReference type="EC" id="3.6.4.-" evidence="1"/>
<dbReference type="EMBL" id="CP000730">
    <property type="protein sequence ID" value="ABX29647.1"/>
    <property type="molecule type" value="Genomic_DNA"/>
</dbReference>
<dbReference type="RefSeq" id="WP_001005767.1">
    <property type="nucleotide sequence ID" value="NC_010079.1"/>
</dbReference>
<dbReference type="SMR" id="A8Z2G9"/>
<dbReference type="KEGG" id="sax:USA300HOU_1640"/>
<dbReference type="HOGENOM" id="CLU_055599_1_0_9"/>
<dbReference type="GO" id="GO:0005737">
    <property type="term" value="C:cytoplasm"/>
    <property type="evidence" value="ECO:0007669"/>
    <property type="project" value="UniProtKB-SubCell"/>
</dbReference>
<dbReference type="GO" id="GO:0048476">
    <property type="term" value="C:Holliday junction resolvase complex"/>
    <property type="evidence" value="ECO:0007669"/>
    <property type="project" value="UniProtKB-UniRule"/>
</dbReference>
<dbReference type="GO" id="GO:0005524">
    <property type="term" value="F:ATP binding"/>
    <property type="evidence" value="ECO:0007669"/>
    <property type="project" value="UniProtKB-UniRule"/>
</dbReference>
<dbReference type="GO" id="GO:0016887">
    <property type="term" value="F:ATP hydrolysis activity"/>
    <property type="evidence" value="ECO:0007669"/>
    <property type="project" value="InterPro"/>
</dbReference>
<dbReference type="GO" id="GO:0000400">
    <property type="term" value="F:four-way junction DNA binding"/>
    <property type="evidence" value="ECO:0007669"/>
    <property type="project" value="UniProtKB-UniRule"/>
</dbReference>
<dbReference type="GO" id="GO:0009378">
    <property type="term" value="F:four-way junction helicase activity"/>
    <property type="evidence" value="ECO:0007669"/>
    <property type="project" value="InterPro"/>
</dbReference>
<dbReference type="GO" id="GO:0006310">
    <property type="term" value="P:DNA recombination"/>
    <property type="evidence" value="ECO:0007669"/>
    <property type="project" value="UniProtKB-UniRule"/>
</dbReference>
<dbReference type="GO" id="GO:0006281">
    <property type="term" value="P:DNA repair"/>
    <property type="evidence" value="ECO:0007669"/>
    <property type="project" value="UniProtKB-UniRule"/>
</dbReference>
<dbReference type="CDD" id="cd00009">
    <property type="entry name" value="AAA"/>
    <property type="match status" value="1"/>
</dbReference>
<dbReference type="Gene3D" id="1.10.8.60">
    <property type="match status" value="1"/>
</dbReference>
<dbReference type="Gene3D" id="3.40.50.300">
    <property type="entry name" value="P-loop containing nucleotide triphosphate hydrolases"/>
    <property type="match status" value="1"/>
</dbReference>
<dbReference type="Gene3D" id="1.10.10.10">
    <property type="entry name" value="Winged helix-like DNA-binding domain superfamily/Winged helix DNA-binding domain"/>
    <property type="match status" value="1"/>
</dbReference>
<dbReference type="HAMAP" id="MF_00016">
    <property type="entry name" value="DNA_HJ_migration_RuvB"/>
    <property type="match status" value="1"/>
</dbReference>
<dbReference type="InterPro" id="IPR003593">
    <property type="entry name" value="AAA+_ATPase"/>
</dbReference>
<dbReference type="InterPro" id="IPR041445">
    <property type="entry name" value="AAA_lid_4"/>
</dbReference>
<dbReference type="InterPro" id="IPR004605">
    <property type="entry name" value="DNA_helicase_Holl-junc_RuvB"/>
</dbReference>
<dbReference type="InterPro" id="IPR027417">
    <property type="entry name" value="P-loop_NTPase"/>
</dbReference>
<dbReference type="InterPro" id="IPR008824">
    <property type="entry name" value="RuvB-like_N"/>
</dbReference>
<dbReference type="InterPro" id="IPR008823">
    <property type="entry name" value="RuvB_C"/>
</dbReference>
<dbReference type="InterPro" id="IPR036388">
    <property type="entry name" value="WH-like_DNA-bd_sf"/>
</dbReference>
<dbReference type="InterPro" id="IPR036390">
    <property type="entry name" value="WH_DNA-bd_sf"/>
</dbReference>
<dbReference type="NCBIfam" id="NF000868">
    <property type="entry name" value="PRK00080.1"/>
    <property type="match status" value="1"/>
</dbReference>
<dbReference type="NCBIfam" id="TIGR00635">
    <property type="entry name" value="ruvB"/>
    <property type="match status" value="1"/>
</dbReference>
<dbReference type="PANTHER" id="PTHR42848">
    <property type="match status" value="1"/>
</dbReference>
<dbReference type="PANTHER" id="PTHR42848:SF1">
    <property type="entry name" value="HOLLIDAY JUNCTION BRANCH MIGRATION COMPLEX SUBUNIT RUVB"/>
    <property type="match status" value="1"/>
</dbReference>
<dbReference type="Pfam" id="PF17864">
    <property type="entry name" value="AAA_lid_4"/>
    <property type="match status" value="1"/>
</dbReference>
<dbReference type="Pfam" id="PF05491">
    <property type="entry name" value="RuvB_C"/>
    <property type="match status" value="1"/>
</dbReference>
<dbReference type="Pfam" id="PF05496">
    <property type="entry name" value="RuvB_N"/>
    <property type="match status" value="1"/>
</dbReference>
<dbReference type="SMART" id="SM00382">
    <property type="entry name" value="AAA"/>
    <property type="match status" value="1"/>
</dbReference>
<dbReference type="SUPFAM" id="SSF52540">
    <property type="entry name" value="P-loop containing nucleoside triphosphate hydrolases"/>
    <property type="match status" value="1"/>
</dbReference>
<dbReference type="SUPFAM" id="SSF46785">
    <property type="entry name" value="Winged helix' DNA-binding domain"/>
    <property type="match status" value="1"/>
</dbReference>
<keyword id="KW-0067">ATP-binding</keyword>
<keyword id="KW-0963">Cytoplasm</keyword>
<keyword id="KW-0227">DNA damage</keyword>
<keyword id="KW-0233">DNA recombination</keyword>
<keyword id="KW-0234">DNA repair</keyword>
<keyword id="KW-0238">DNA-binding</keyword>
<keyword id="KW-0378">Hydrolase</keyword>
<keyword id="KW-0547">Nucleotide-binding</keyword>
<sequence>MNERMVDQSMHSEETDFELSLRPTRLRQYIGQNSIKSNLEVFIKAAKLRHEPLDHVLLFGPPGLGKTTLSNIIANEMEVNIRTVSGPSLERPGDLAAILSGLQPGDVLFIDEIHRLSSVVEEVLYPAMEDFFLDIIIGKGDEARSIRIDLPPFTLVGATTRAGSLTGPLRDRFGVHLRLEYYNESDLKEIIIRTAEVLGTGIDEESAIELAKRSRGTPRVANRLLKRVRDFQQVNEDEQIYIETTKHALGLLQVDQHGLDYIDHKMMNCIIKQYNGGPVGLDTIAVTIGEERITIEDVYEPFLIQKGFLERTPRGRKATPLAYEHFAKSNEERE</sequence>
<reference key="1">
    <citation type="journal article" date="2007" name="BMC Microbiol.">
        <title>Subtle genetic changes enhance virulence of methicillin resistant and sensitive Staphylococcus aureus.</title>
        <authorList>
            <person name="Highlander S.K."/>
            <person name="Hulten K.G."/>
            <person name="Qin X."/>
            <person name="Jiang H."/>
            <person name="Yerrapragada S."/>
            <person name="Mason E.O. Jr."/>
            <person name="Shang Y."/>
            <person name="Williams T.M."/>
            <person name="Fortunov R.M."/>
            <person name="Liu Y."/>
            <person name="Igboeli O."/>
            <person name="Petrosino J."/>
            <person name="Tirumalai M."/>
            <person name="Uzman A."/>
            <person name="Fox G.E."/>
            <person name="Cardenas A.M."/>
            <person name="Muzny D.M."/>
            <person name="Hemphill L."/>
            <person name="Ding Y."/>
            <person name="Dugan S."/>
            <person name="Blyth P.R."/>
            <person name="Buhay C.J."/>
            <person name="Dinh H.H."/>
            <person name="Hawes A.C."/>
            <person name="Holder M."/>
            <person name="Kovar C.L."/>
            <person name="Lee S.L."/>
            <person name="Liu W."/>
            <person name="Nazareth L.V."/>
            <person name="Wang Q."/>
            <person name="Zhou J."/>
            <person name="Kaplan S.L."/>
            <person name="Weinstock G.M."/>
        </authorList>
    </citation>
    <scope>NUCLEOTIDE SEQUENCE [LARGE SCALE GENOMIC DNA]</scope>
    <source>
        <strain>USA300 / TCH1516</strain>
    </source>
</reference>